<protein>
    <recommendedName>
        <fullName>Nuclear receptor subfamily 4 group A member 1</fullName>
    </recommendedName>
    <alternativeName>
        <fullName>Nerve growth factor-induced protein I-B homolog</fullName>
    </alternativeName>
</protein>
<dbReference type="EMBL" id="X70700">
    <property type="protein sequence ID" value="CAA50031.1"/>
    <property type="molecule type" value="mRNA"/>
</dbReference>
<dbReference type="PIR" id="S33763">
    <property type="entry name" value="S33763"/>
</dbReference>
<dbReference type="SMR" id="Q04913"/>
<dbReference type="AGR" id="Xenbase:XB-GENE-483319"/>
<dbReference type="Xenbase" id="XB-GENE-483319">
    <property type="gene designation" value="nr4a1.L"/>
</dbReference>
<dbReference type="Proteomes" id="UP000186698">
    <property type="component" value="Unplaced"/>
</dbReference>
<dbReference type="GO" id="GO:0000785">
    <property type="term" value="C:chromatin"/>
    <property type="evidence" value="ECO:0000250"/>
    <property type="project" value="UniProtKB"/>
</dbReference>
<dbReference type="GO" id="GO:0005829">
    <property type="term" value="C:cytosol"/>
    <property type="evidence" value="ECO:0000250"/>
    <property type="project" value="UniProtKB"/>
</dbReference>
<dbReference type="GO" id="GO:0005739">
    <property type="term" value="C:mitochondrion"/>
    <property type="evidence" value="ECO:0000250"/>
    <property type="project" value="UniProtKB"/>
</dbReference>
<dbReference type="GO" id="GO:0005634">
    <property type="term" value="C:nucleus"/>
    <property type="evidence" value="ECO:0000250"/>
    <property type="project" value="UniProtKB"/>
</dbReference>
<dbReference type="GO" id="GO:0005667">
    <property type="term" value="C:transcription regulator complex"/>
    <property type="evidence" value="ECO:0000318"/>
    <property type="project" value="GO_Central"/>
</dbReference>
<dbReference type="GO" id="GO:0000981">
    <property type="term" value="F:DNA-binding transcription factor activity, RNA polymerase II-specific"/>
    <property type="evidence" value="ECO:0000250"/>
    <property type="project" value="UniProtKB"/>
</dbReference>
<dbReference type="GO" id="GO:0003690">
    <property type="term" value="F:double-stranded DNA binding"/>
    <property type="evidence" value="ECO:0000250"/>
    <property type="project" value="UniProtKB"/>
</dbReference>
<dbReference type="GO" id="GO:0001530">
    <property type="term" value="F:lipopolysaccharide binding"/>
    <property type="evidence" value="ECO:0000250"/>
    <property type="project" value="UniProtKB"/>
</dbReference>
<dbReference type="GO" id="GO:0035259">
    <property type="term" value="F:nuclear glucocorticoid receptor binding"/>
    <property type="evidence" value="ECO:0000318"/>
    <property type="project" value="GO_Central"/>
</dbReference>
<dbReference type="GO" id="GO:0004879">
    <property type="term" value="F:nuclear receptor activity"/>
    <property type="evidence" value="ECO:0007669"/>
    <property type="project" value="InterPro"/>
</dbReference>
<dbReference type="GO" id="GO:0000978">
    <property type="term" value="F:RNA polymerase II cis-regulatory region sequence-specific DNA binding"/>
    <property type="evidence" value="ECO:0000318"/>
    <property type="project" value="GO_Central"/>
</dbReference>
<dbReference type="GO" id="GO:0008270">
    <property type="term" value="F:zinc ion binding"/>
    <property type="evidence" value="ECO:0007669"/>
    <property type="project" value="UniProtKB-KW"/>
</dbReference>
<dbReference type="GO" id="GO:0071376">
    <property type="term" value="P:cellular response to corticotropin-releasing hormone stimulus"/>
    <property type="evidence" value="ECO:0000318"/>
    <property type="project" value="GO_Central"/>
</dbReference>
<dbReference type="GO" id="GO:0032497">
    <property type="term" value="P:detection of lipopolysaccharide"/>
    <property type="evidence" value="ECO:0000250"/>
    <property type="project" value="UniProtKB"/>
</dbReference>
<dbReference type="GO" id="GO:0006954">
    <property type="term" value="P:inflammatory response"/>
    <property type="evidence" value="ECO:0007669"/>
    <property type="project" value="UniProtKB-KW"/>
</dbReference>
<dbReference type="GO" id="GO:0160075">
    <property type="term" value="P:non-canonical inflammasome complex assembly"/>
    <property type="evidence" value="ECO:0000250"/>
    <property type="project" value="UniProtKB"/>
</dbReference>
<dbReference type="GO" id="GO:0045944">
    <property type="term" value="P:positive regulation of transcription by RNA polymerase II"/>
    <property type="evidence" value="ECO:0000250"/>
    <property type="project" value="UniProtKB"/>
</dbReference>
<dbReference type="GO" id="GO:0006357">
    <property type="term" value="P:regulation of transcription by RNA polymerase II"/>
    <property type="evidence" value="ECO:0000318"/>
    <property type="project" value="GO_Central"/>
</dbReference>
<dbReference type="CDD" id="cd06969">
    <property type="entry name" value="NR_DBD_NGFI-B"/>
    <property type="match status" value="1"/>
</dbReference>
<dbReference type="CDD" id="cd07348">
    <property type="entry name" value="NR_LBD_NGFI-B"/>
    <property type="match status" value="1"/>
</dbReference>
<dbReference type="FunFam" id="1.10.565.10:FF:000008">
    <property type="entry name" value="Nuclear receptor subfamily 4 group A member 1"/>
    <property type="match status" value="1"/>
</dbReference>
<dbReference type="FunFam" id="3.30.50.10:FF:000009">
    <property type="entry name" value="nuclear receptor subfamily 4 group A member 2"/>
    <property type="match status" value="1"/>
</dbReference>
<dbReference type="Gene3D" id="3.30.50.10">
    <property type="entry name" value="Erythroid Transcription Factor GATA-1, subunit A"/>
    <property type="match status" value="1"/>
</dbReference>
<dbReference type="Gene3D" id="1.10.565.10">
    <property type="entry name" value="Retinoid X Receptor"/>
    <property type="match status" value="1"/>
</dbReference>
<dbReference type="InterPro" id="IPR035500">
    <property type="entry name" value="NHR-like_dom_sf"/>
</dbReference>
<dbReference type="InterPro" id="IPR003070">
    <property type="entry name" value="NR4A1-3"/>
</dbReference>
<dbReference type="InterPro" id="IPR000536">
    <property type="entry name" value="Nucl_hrmn_rcpt_lig-bd"/>
</dbReference>
<dbReference type="InterPro" id="IPR001723">
    <property type="entry name" value="Nuclear_hrmn_rcpt"/>
</dbReference>
<dbReference type="InterPro" id="IPR001628">
    <property type="entry name" value="Znf_hrmn_rcpt"/>
</dbReference>
<dbReference type="InterPro" id="IPR013088">
    <property type="entry name" value="Znf_NHR/GATA"/>
</dbReference>
<dbReference type="PANTHER" id="PTHR24085">
    <property type="entry name" value="NUCLEAR HORMONE RECEPTOR"/>
    <property type="match status" value="1"/>
</dbReference>
<dbReference type="PANTHER" id="PTHR24085:SF1">
    <property type="entry name" value="NUCLEAR RECEPTOR SUBFAMILY 4 GROUP A MEMBER 1"/>
    <property type="match status" value="1"/>
</dbReference>
<dbReference type="Pfam" id="PF00104">
    <property type="entry name" value="Hormone_recep"/>
    <property type="match status" value="1"/>
</dbReference>
<dbReference type="Pfam" id="PF00105">
    <property type="entry name" value="zf-C4"/>
    <property type="match status" value="1"/>
</dbReference>
<dbReference type="PRINTS" id="PR01284">
    <property type="entry name" value="NUCLEARECPTR"/>
</dbReference>
<dbReference type="PRINTS" id="PR00398">
    <property type="entry name" value="STRDHORMONER"/>
</dbReference>
<dbReference type="PRINTS" id="PR00047">
    <property type="entry name" value="STROIDFINGER"/>
</dbReference>
<dbReference type="SMART" id="SM00430">
    <property type="entry name" value="HOLI"/>
    <property type="match status" value="1"/>
</dbReference>
<dbReference type="SMART" id="SM00399">
    <property type="entry name" value="ZnF_C4"/>
    <property type="match status" value="1"/>
</dbReference>
<dbReference type="SUPFAM" id="SSF57716">
    <property type="entry name" value="Glucocorticoid receptor-like (DNA-binding domain)"/>
    <property type="match status" value="1"/>
</dbReference>
<dbReference type="SUPFAM" id="SSF48508">
    <property type="entry name" value="Nuclear receptor ligand-binding domain"/>
    <property type="match status" value="1"/>
</dbReference>
<dbReference type="PROSITE" id="PS51843">
    <property type="entry name" value="NR_LBD"/>
    <property type="match status" value="1"/>
</dbReference>
<dbReference type="PROSITE" id="PS00031">
    <property type="entry name" value="NUCLEAR_REC_DBD_1"/>
    <property type="match status" value="1"/>
</dbReference>
<dbReference type="PROSITE" id="PS51030">
    <property type="entry name" value="NUCLEAR_REC_DBD_2"/>
    <property type="match status" value="1"/>
</dbReference>
<comment type="function">
    <text evidence="3">Orphan nuclear receptor. Binds the NGFI-B response element (NBRE) 5'-AAAAGGTCA-3'.</text>
</comment>
<comment type="function">
    <text evidence="1">In the cytosol, may detect bacterial lipopolysaccharide (LPS) and NBRE-containing mitochondrial DNA released during pyroptosis, and play a role in non-canonical inflammasome activation.</text>
</comment>
<comment type="cofactor">
    <cofactor evidence="3">
        <name>Zn(2+)</name>
        <dbReference type="ChEBI" id="CHEBI:29105"/>
    </cofactor>
    <text evidence="3">Binds 2 zinc ions.</text>
</comment>
<comment type="subcellular location">
    <subcellularLocation>
        <location evidence="2">Nucleus</location>
    </subcellularLocation>
    <subcellularLocation>
        <location evidence="2">Cytoplasm</location>
        <location evidence="2">Cytosol</location>
    </subcellularLocation>
</comment>
<comment type="domain">
    <text evidence="1">The NR LBD domain may bind the lipid A moiety of lipopolysaccharide (LPS) in the cytosol.</text>
</comment>
<comment type="similarity">
    <text evidence="6">Belongs to the nuclear hormone receptor family. NR4 subfamily.</text>
</comment>
<organism>
    <name type="scientific">Xenopus laevis</name>
    <name type="common">African clawed frog</name>
    <dbReference type="NCBI Taxonomy" id="8355"/>
    <lineage>
        <taxon>Eukaryota</taxon>
        <taxon>Metazoa</taxon>
        <taxon>Chordata</taxon>
        <taxon>Craniata</taxon>
        <taxon>Vertebrata</taxon>
        <taxon>Euteleostomi</taxon>
        <taxon>Amphibia</taxon>
        <taxon>Batrachia</taxon>
        <taxon>Anura</taxon>
        <taxon>Pipoidea</taxon>
        <taxon>Pipidae</taxon>
        <taxon>Xenopodinae</taxon>
        <taxon>Xenopus</taxon>
        <taxon>Xenopus</taxon>
    </lineage>
</organism>
<gene>
    <name type="primary">nr4a1</name>
</gene>
<proteinExistence type="evidence at transcript level"/>
<feature type="chain" id="PRO_0000053721" description="Nuclear receptor subfamily 4 group A member 1">
    <location>
        <begin position="1"/>
        <end position="577"/>
    </location>
</feature>
<feature type="domain" description="NR LBD" evidence="5">
    <location>
        <begin position="339"/>
        <end position="574"/>
    </location>
</feature>
<feature type="DNA-binding region" description="Nuclear receptor" evidence="4">
    <location>
        <begin position="243"/>
        <end position="318"/>
    </location>
</feature>
<feature type="zinc finger region" description="NR C4-type" evidence="4">
    <location>
        <begin position="246"/>
        <end position="266"/>
    </location>
</feature>
<feature type="zinc finger region" description="NR C4-type" evidence="4">
    <location>
        <begin position="282"/>
        <end position="311"/>
    </location>
</feature>
<feature type="region of interest" description="Required for binding NBRE-containing DNA" evidence="1">
    <location>
        <begin position="247"/>
        <end position="333"/>
    </location>
</feature>
<feature type="region of interest" description="May bind lipopolysaccharide" evidence="1">
    <location>
        <begin position="500"/>
        <end position="523"/>
    </location>
</feature>
<feature type="region of interest" description="AF-2" evidence="5">
    <location>
        <begin position="563"/>
        <end position="574"/>
    </location>
</feature>
<accession>Q04913</accession>
<name>NR4A1_XENLA</name>
<reference key="1">
    <citation type="journal article" date="1993" name="Biochim. Biophys. Acta">
        <title>Cloning and sequencing of a Xenopus homologue of the inducible orphan receptor NGFI-B.</title>
        <authorList>
            <person name="Smith T.S."/>
            <person name="Matharu P.J."/>
            <person name="Sweeney G.E."/>
        </authorList>
    </citation>
    <scope>NUCLEOTIDE SEQUENCE [MRNA]</scope>
    <source>
        <tissue>Neurula</tissue>
    </source>
</reference>
<sequence>MPCIQAQHGSLSQCAGPCDNYVPDILNSEFGKFTMDLVNSEIAASTSLPSFSTFMDGYTGEFDAFLYQIPSSNQQSSLKVEEFQVFGCYPGSFTNQLDETMSSSGSDYYGSPCSIPSPSTPGFQNPQLPTWECSYGAYSPTQNYDNMRHWTEQQKNSISQQTFFSFGTPAHSPNMAANPLKIAPATHRLDQQLVDTDVFALAQNSSAGFPAVPLGQAPGVLDSSVLLDSPLSPSKTRSPSSNEGRCAVCGDNASCQHYGVRTCEGCKGFFKRTVQKNAKYICLANKDCPVDKRRRNRCQFCRFQKCLVVGMVKEVVRTDSLKGRRGRLPSKPKQIAESSPVDLINSLVRAHIDSIPSSSKLDYSKFQETVPLQLEKESSVDVQQFYDLLSGSLEVIRKWAEKIQGFVDLPKEDQDLLLESAFLELFILRLAYRSRPEEGKLIFCNGVVLHRTQCVRGFGEWIDSIIEFSHSLQRMNIDVPSFSCLSALVIVTDRHGLKEPKKVEELQSQIINCLKEHIPSSMNEQNRPNCLSKLLGKLPELRTLCTQGLQRIFYLKLEDLVPPPPIVDKIFMDTLPF</sequence>
<evidence type="ECO:0000250" key="1">
    <source>
        <dbReference type="UniProtKB" id="P12813"/>
    </source>
</evidence>
<evidence type="ECO:0000250" key="2">
    <source>
        <dbReference type="UniProtKB" id="P22736"/>
    </source>
</evidence>
<evidence type="ECO:0000250" key="3">
    <source>
        <dbReference type="UniProtKB" id="P22829"/>
    </source>
</evidence>
<evidence type="ECO:0000255" key="4">
    <source>
        <dbReference type="PROSITE-ProRule" id="PRU00407"/>
    </source>
</evidence>
<evidence type="ECO:0000255" key="5">
    <source>
        <dbReference type="PROSITE-ProRule" id="PRU01189"/>
    </source>
</evidence>
<evidence type="ECO:0000305" key="6"/>
<keyword id="KW-0963">Cytoplasm</keyword>
<keyword id="KW-0238">DNA-binding</keyword>
<keyword id="KW-0395">Inflammatory response</keyword>
<keyword id="KW-0479">Metal-binding</keyword>
<keyword id="KW-0539">Nucleus</keyword>
<keyword id="KW-0675">Receptor</keyword>
<keyword id="KW-1185">Reference proteome</keyword>
<keyword id="KW-0804">Transcription</keyword>
<keyword id="KW-0805">Transcription regulation</keyword>
<keyword id="KW-0862">Zinc</keyword>
<keyword id="KW-0863">Zinc-finger</keyword>